<gene>
    <name type="ordered locus">RL1951</name>
</gene>
<name>NQOR_RHIJ3</name>
<dbReference type="EC" id="1.6.5.2" evidence="1"/>
<dbReference type="EMBL" id="AM236080">
    <property type="protein sequence ID" value="CAK07444.1"/>
    <property type="molecule type" value="Genomic_DNA"/>
</dbReference>
<dbReference type="SMR" id="Q1MHW6"/>
<dbReference type="EnsemblBacteria" id="CAK07444">
    <property type="protein sequence ID" value="CAK07444"/>
    <property type="gene ID" value="RL1951"/>
</dbReference>
<dbReference type="KEGG" id="rle:RL1951"/>
<dbReference type="eggNOG" id="COG0655">
    <property type="taxonomic scope" value="Bacteria"/>
</dbReference>
<dbReference type="HOGENOM" id="CLU_051402_0_2_5"/>
<dbReference type="Proteomes" id="UP000006575">
    <property type="component" value="Chromosome"/>
</dbReference>
<dbReference type="GO" id="GO:0016020">
    <property type="term" value="C:membrane"/>
    <property type="evidence" value="ECO:0007669"/>
    <property type="project" value="TreeGrafter"/>
</dbReference>
<dbReference type="GO" id="GO:0050660">
    <property type="term" value="F:flavin adenine dinucleotide binding"/>
    <property type="evidence" value="ECO:0007669"/>
    <property type="project" value="UniProtKB-UniRule"/>
</dbReference>
<dbReference type="GO" id="GO:0010181">
    <property type="term" value="F:FMN binding"/>
    <property type="evidence" value="ECO:0007669"/>
    <property type="project" value="InterPro"/>
</dbReference>
<dbReference type="GO" id="GO:0051287">
    <property type="term" value="F:NAD binding"/>
    <property type="evidence" value="ECO:0007669"/>
    <property type="project" value="UniProtKB-UniRule"/>
</dbReference>
<dbReference type="GO" id="GO:0050136">
    <property type="term" value="F:NADH:ubiquinone reductase (non-electrogenic) activity"/>
    <property type="evidence" value="ECO:0007669"/>
    <property type="project" value="RHEA"/>
</dbReference>
<dbReference type="GO" id="GO:0050661">
    <property type="term" value="F:NADP binding"/>
    <property type="evidence" value="ECO:0007669"/>
    <property type="project" value="UniProtKB-UniRule"/>
</dbReference>
<dbReference type="GO" id="GO:0008753">
    <property type="term" value="F:NADPH dehydrogenase (quinone) activity"/>
    <property type="evidence" value="ECO:0007669"/>
    <property type="project" value="RHEA"/>
</dbReference>
<dbReference type="FunFam" id="3.40.50.360:FF:000001">
    <property type="entry name" value="NAD(P)H dehydrogenase (Quinone) FQR1-like"/>
    <property type="match status" value="1"/>
</dbReference>
<dbReference type="Gene3D" id="3.40.50.360">
    <property type="match status" value="1"/>
</dbReference>
<dbReference type="HAMAP" id="MF_01017">
    <property type="entry name" value="NQOR"/>
    <property type="match status" value="1"/>
</dbReference>
<dbReference type="InterPro" id="IPR008254">
    <property type="entry name" value="Flavodoxin/NO_synth"/>
</dbReference>
<dbReference type="InterPro" id="IPR029039">
    <property type="entry name" value="Flavoprotein-like_sf"/>
</dbReference>
<dbReference type="InterPro" id="IPR010089">
    <property type="entry name" value="Flavoprotein_WrbA-like"/>
</dbReference>
<dbReference type="InterPro" id="IPR037513">
    <property type="entry name" value="NQO"/>
</dbReference>
<dbReference type="NCBIfam" id="TIGR01755">
    <property type="entry name" value="flav_wrbA"/>
    <property type="match status" value="1"/>
</dbReference>
<dbReference type="NCBIfam" id="NF002999">
    <property type="entry name" value="PRK03767.1"/>
    <property type="match status" value="1"/>
</dbReference>
<dbReference type="PANTHER" id="PTHR30546">
    <property type="entry name" value="FLAVODOXIN-RELATED PROTEIN WRBA-RELATED"/>
    <property type="match status" value="1"/>
</dbReference>
<dbReference type="PANTHER" id="PTHR30546:SF23">
    <property type="entry name" value="FLAVOPROTEIN-LIKE PROTEIN YCP4-RELATED"/>
    <property type="match status" value="1"/>
</dbReference>
<dbReference type="Pfam" id="PF00258">
    <property type="entry name" value="Flavodoxin_1"/>
    <property type="match status" value="1"/>
</dbReference>
<dbReference type="SUPFAM" id="SSF52218">
    <property type="entry name" value="Flavoproteins"/>
    <property type="match status" value="1"/>
</dbReference>
<dbReference type="PROSITE" id="PS50902">
    <property type="entry name" value="FLAVODOXIN_LIKE"/>
    <property type="match status" value="1"/>
</dbReference>
<organism>
    <name type="scientific">Rhizobium johnstonii (strain DSM 114642 / LMG 32736 / 3841)</name>
    <name type="common">Rhizobium leguminosarum bv. viciae</name>
    <dbReference type="NCBI Taxonomy" id="216596"/>
    <lineage>
        <taxon>Bacteria</taxon>
        <taxon>Pseudomonadati</taxon>
        <taxon>Pseudomonadota</taxon>
        <taxon>Alphaproteobacteria</taxon>
        <taxon>Hyphomicrobiales</taxon>
        <taxon>Rhizobiaceae</taxon>
        <taxon>Rhizobium/Agrobacterium group</taxon>
        <taxon>Rhizobium</taxon>
        <taxon>Rhizobium johnstonii</taxon>
    </lineage>
</organism>
<proteinExistence type="inferred from homology"/>
<accession>Q1MHW6</accession>
<comment type="catalytic activity">
    <reaction evidence="1">
        <text>a quinone + NADH + H(+) = a quinol + NAD(+)</text>
        <dbReference type="Rhea" id="RHEA:46160"/>
        <dbReference type="ChEBI" id="CHEBI:15378"/>
        <dbReference type="ChEBI" id="CHEBI:24646"/>
        <dbReference type="ChEBI" id="CHEBI:57540"/>
        <dbReference type="ChEBI" id="CHEBI:57945"/>
        <dbReference type="ChEBI" id="CHEBI:132124"/>
        <dbReference type="EC" id="1.6.5.2"/>
    </reaction>
</comment>
<comment type="catalytic activity">
    <reaction evidence="1">
        <text>a quinone + NADPH + H(+) = a quinol + NADP(+)</text>
        <dbReference type="Rhea" id="RHEA:46164"/>
        <dbReference type="ChEBI" id="CHEBI:15378"/>
        <dbReference type="ChEBI" id="CHEBI:24646"/>
        <dbReference type="ChEBI" id="CHEBI:57783"/>
        <dbReference type="ChEBI" id="CHEBI:58349"/>
        <dbReference type="ChEBI" id="CHEBI:132124"/>
        <dbReference type="EC" id="1.6.5.2"/>
    </reaction>
</comment>
<comment type="cofactor">
    <cofactor evidence="1">
        <name>FMN</name>
        <dbReference type="ChEBI" id="CHEBI:58210"/>
    </cofactor>
    <text evidence="1">Binds 1 FMN per monomer.</text>
</comment>
<comment type="similarity">
    <text evidence="1">Belongs to the WrbA family.</text>
</comment>
<sequence>MAKVLVLYYSAYGHIETMAYAVAEGAKSAGAEVTVKRVPELVPEDVAKASYYKVDQAAPIATVDELADYDAIIVGAGTRFGTVASQMRNFWDQTGGLWFAGKLVGKLGSVFTSSATQHGGQESTILGFIPTFLHQGMVVAGLPYAFQGQMGTEEVKGGSPYGASTITNGDGSRQPSEIELEGAKYQGAHVAKLAAKLA</sequence>
<feature type="chain" id="PRO_0000291024" description="NAD(P)H dehydrogenase (quinone)">
    <location>
        <begin position="1"/>
        <end position="198"/>
    </location>
</feature>
<feature type="domain" description="Flavodoxin-like" evidence="1">
    <location>
        <begin position="4"/>
        <end position="190"/>
    </location>
</feature>
<feature type="binding site" evidence="1">
    <location>
        <begin position="10"/>
        <end position="15"/>
    </location>
    <ligand>
        <name>FMN</name>
        <dbReference type="ChEBI" id="CHEBI:58210"/>
    </ligand>
</feature>
<feature type="binding site" evidence="1">
    <location>
        <position position="12"/>
    </location>
    <ligand>
        <name>NAD(+)</name>
        <dbReference type="ChEBI" id="CHEBI:57540"/>
    </ligand>
</feature>
<feature type="binding site" evidence="1">
    <location>
        <begin position="78"/>
        <end position="80"/>
    </location>
    <ligand>
        <name>FMN</name>
        <dbReference type="ChEBI" id="CHEBI:58210"/>
    </ligand>
</feature>
<feature type="binding site" evidence="1">
    <location>
        <position position="98"/>
    </location>
    <ligand>
        <name>substrate</name>
    </ligand>
</feature>
<feature type="binding site" evidence="1">
    <location>
        <begin position="113"/>
        <end position="119"/>
    </location>
    <ligand>
        <name>FMN</name>
        <dbReference type="ChEBI" id="CHEBI:58210"/>
    </ligand>
</feature>
<feature type="binding site" evidence="1">
    <location>
        <position position="134"/>
    </location>
    <ligand>
        <name>FMN</name>
        <dbReference type="ChEBI" id="CHEBI:58210"/>
    </ligand>
</feature>
<keyword id="KW-0285">Flavoprotein</keyword>
<keyword id="KW-0288">FMN</keyword>
<keyword id="KW-0520">NAD</keyword>
<keyword id="KW-0521">NADP</keyword>
<keyword id="KW-0547">Nucleotide-binding</keyword>
<keyword id="KW-0560">Oxidoreductase</keyword>
<reference key="1">
    <citation type="journal article" date="2006" name="Genome Biol.">
        <title>The genome of Rhizobium leguminosarum has recognizable core and accessory components.</title>
        <authorList>
            <person name="Young J.P.W."/>
            <person name="Crossman L.C."/>
            <person name="Johnston A.W.B."/>
            <person name="Thomson N.R."/>
            <person name="Ghazoui Z.F."/>
            <person name="Hull K.H."/>
            <person name="Wexler M."/>
            <person name="Curson A.R.J."/>
            <person name="Todd J.D."/>
            <person name="Poole P.S."/>
            <person name="Mauchline T.H."/>
            <person name="East A.K."/>
            <person name="Quail M.A."/>
            <person name="Churcher C."/>
            <person name="Arrowsmith C."/>
            <person name="Cherevach I."/>
            <person name="Chillingworth T."/>
            <person name="Clarke K."/>
            <person name="Cronin A."/>
            <person name="Davis P."/>
            <person name="Fraser A."/>
            <person name="Hance Z."/>
            <person name="Hauser H."/>
            <person name="Jagels K."/>
            <person name="Moule S."/>
            <person name="Mungall K."/>
            <person name="Norbertczak H."/>
            <person name="Rabbinowitsch E."/>
            <person name="Sanders M."/>
            <person name="Simmonds M."/>
            <person name="Whitehead S."/>
            <person name="Parkhill J."/>
        </authorList>
    </citation>
    <scope>NUCLEOTIDE SEQUENCE [LARGE SCALE GENOMIC DNA]</scope>
    <source>
        <strain>DSM 114642 / LMG 32736 / 3841</strain>
    </source>
</reference>
<evidence type="ECO:0000255" key="1">
    <source>
        <dbReference type="HAMAP-Rule" id="MF_01017"/>
    </source>
</evidence>
<protein>
    <recommendedName>
        <fullName evidence="1">NAD(P)H dehydrogenase (quinone)</fullName>
        <ecNumber evidence="1">1.6.5.2</ecNumber>
    </recommendedName>
    <alternativeName>
        <fullName>Flavoprotein WrbA</fullName>
    </alternativeName>
    <alternativeName>
        <fullName evidence="1">NAD(P)H:quinone oxidoreductase</fullName>
        <shortName evidence="1">NQO</shortName>
    </alternativeName>
</protein>